<reference key="1">
    <citation type="submission" date="2003-06" db="EMBL/GenBank/DDBJ databases">
        <title>The complete genome sequence of Haemophilus ducreyi.</title>
        <authorList>
            <person name="Munson R.S. Jr."/>
            <person name="Ray W.C."/>
            <person name="Mahairas G."/>
            <person name="Sabo P."/>
            <person name="Mungur R."/>
            <person name="Johnson L."/>
            <person name="Nguyen D."/>
            <person name="Wang J."/>
            <person name="Forst C."/>
            <person name="Hood L."/>
        </authorList>
    </citation>
    <scope>NUCLEOTIDE SEQUENCE [LARGE SCALE GENOMIC DNA]</scope>
    <source>
        <strain>35000HP / ATCC 700724</strain>
    </source>
</reference>
<gene>
    <name evidence="1" type="primary">dsbB</name>
    <name type="ordered locus">HD_1729</name>
</gene>
<name>DSBB_HAEDU</name>
<accession>Q7VKY2</accession>
<sequence>MLSYFKELSLRRPAWLLLATLACTLEVTGLYFQHKLGLIPCVMCIYERVALTGLLIAGLIALIAPNFFLFRWLALVLWGFSAFKGLSLSIKHYDYQANPSPWNQCEFKPQFPQTIPLDEWFPNIFAAGTVNCSEKQWQMLGWGMPEWLIVAFSLFMLFFLIVFMSQFKRAKPQYRSVFR</sequence>
<evidence type="ECO:0000255" key="1">
    <source>
        <dbReference type="HAMAP-Rule" id="MF_00286"/>
    </source>
</evidence>
<keyword id="KW-0997">Cell inner membrane</keyword>
<keyword id="KW-1003">Cell membrane</keyword>
<keyword id="KW-0143">Chaperone</keyword>
<keyword id="KW-1015">Disulfide bond</keyword>
<keyword id="KW-0249">Electron transport</keyword>
<keyword id="KW-0472">Membrane</keyword>
<keyword id="KW-0560">Oxidoreductase</keyword>
<keyword id="KW-0676">Redox-active center</keyword>
<keyword id="KW-1185">Reference proteome</keyword>
<keyword id="KW-0812">Transmembrane</keyword>
<keyword id="KW-1133">Transmembrane helix</keyword>
<keyword id="KW-0813">Transport</keyword>
<feature type="chain" id="PRO_0000059345" description="Disulfide bond formation protein B">
    <location>
        <begin position="1"/>
        <end position="179"/>
    </location>
</feature>
<feature type="topological domain" description="Cytoplasmic" evidence="1">
    <location>
        <begin position="1"/>
        <end position="14"/>
    </location>
</feature>
<feature type="transmembrane region" description="Helical" evidence="1">
    <location>
        <begin position="15"/>
        <end position="31"/>
    </location>
</feature>
<feature type="topological domain" description="Periplasmic" evidence="1">
    <location>
        <begin position="32"/>
        <end position="49"/>
    </location>
</feature>
<feature type="transmembrane region" description="Helical" evidence="1">
    <location>
        <begin position="50"/>
        <end position="65"/>
    </location>
</feature>
<feature type="topological domain" description="Cytoplasmic" evidence="1">
    <location>
        <begin position="66"/>
        <end position="72"/>
    </location>
</feature>
<feature type="transmembrane region" description="Helical" evidence="1">
    <location>
        <begin position="73"/>
        <end position="90"/>
    </location>
</feature>
<feature type="topological domain" description="Periplasmic" evidence="1">
    <location>
        <begin position="91"/>
        <end position="146"/>
    </location>
</feature>
<feature type="transmembrane region" description="Helical" evidence="1">
    <location>
        <begin position="147"/>
        <end position="165"/>
    </location>
</feature>
<feature type="topological domain" description="Cytoplasmic" evidence="1">
    <location>
        <begin position="166"/>
        <end position="179"/>
    </location>
</feature>
<feature type="disulfide bond" description="Redox-active" evidence="1">
    <location>
        <begin position="41"/>
        <end position="44"/>
    </location>
</feature>
<feature type="disulfide bond" description="Redox-active" evidence="1">
    <location>
        <begin position="105"/>
        <end position="132"/>
    </location>
</feature>
<dbReference type="EMBL" id="AE017143">
    <property type="protein sequence ID" value="AAP96485.1"/>
    <property type="molecule type" value="Genomic_DNA"/>
</dbReference>
<dbReference type="RefSeq" id="WP_010945514.1">
    <property type="nucleotide sequence ID" value="NC_002940.2"/>
</dbReference>
<dbReference type="SMR" id="Q7VKY2"/>
<dbReference type="STRING" id="233412.HD_1729"/>
<dbReference type="KEGG" id="hdu:HD_1729"/>
<dbReference type="eggNOG" id="COG1495">
    <property type="taxonomic scope" value="Bacteria"/>
</dbReference>
<dbReference type="HOGENOM" id="CLU_098660_2_0_6"/>
<dbReference type="OrthoDB" id="3711263at2"/>
<dbReference type="Proteomes" id="UP000001022">
    <property type="component" value="Chromosome"/>
</dbReference>
<dbReference type="GO" id="GO:0005886">
    <property type="term" value="C:plasma membrane"/>
    <property type="evidence" value="ECO:0007669"/>
    <property type="project" value="UniProtKB-SubCell"/>
</dbReference>
<dbReference type="GO" id="GO:0009055">
    <property type="term" value="F:electron transfer activity"/>
    <property type="evidence" value="ECO:0007669"/>
    <property type="project" value="UniProtKB-UniRule"/>
</dbReference>
<dbReference type="GO" id="GO:0015035">
    <property type="term" value="F:protein-disulfide reductase activity"/>
    <property type="evidence" value="ECO:0007669"/>
    <property type="project" value="UniProtKB-UniRule"/>
</dbReference>
<dbReference type="GO" id="GO:0006457">
    <property type="term" value="P:protein folding"/>
    <property type="evidence" value="ECO:0007669"/>
    <property type="project" value="InterPro"/>
</dbReference>
<dbReference type="Gene3D" id="1.20.1550.10">
    <property type="entry name" value="DsbB-like"/>
    <property type="match status" value="1"/>
</dbReference>
<dbReference type="HAMAP" id="MF_00286">
    <property type="entry name" value="DsbB"/>
    <property type="match status" value="1"/>
</dbReference>
<dbReference type="InterPro" id="IPR003752">
    <property type="entry name" value="DiS_bond_form_DsbB/BdbC"/>
</dbReference>
<dbReference type="InterPro" id="IPR022920">
    <property type="entry name" value="Disulphide_bond_form_DsbB"/>
</dbReference>
<dbReference type="InterPro" id="IPR050183">
    <property type="entry name" value="DsbB"/>
</dbReference>
<dbReference type="InterPro" id="IPR023380">
    <property type="entry name" value="DsbB-like_sf"/>
</dbReference>
<dbReference type="NCBIfam" id="NF002485">
    <property type="entry name" value="PRK01749.1"/>
    <property type="match status" value="1"/>
</dbReference>
<dbReference type="PANTHER" id="PTHR36570">
    <property type="entry name" value="DISULFIDE BOND FORMATION PROTEIN B"/>
    <property type="match status" value="1"/>
</dbReference>
<dbReference type="PANTHER" id="PTHR36570:SF2">
    <property type="entry name" value="DISULFIDE BOND FORMATION PROTEIN B"/>
    <property type="match status" value="1"/>
</dbReference>
<dbReference type="Pfam" id="PF02600">
    <property type="entry name" value="DsbB"/>
    <property type="match status" value="1"/>
</dbReference>
<dbReference type="SUPFAM" id="SSF158442">
    <property type="entry name" value="DsbB-like"/>
    <property type="match status" value="1"/>
</dbReference>
<organism>
    <name type="scientific">Haemophilus ducreyi (strain 35000HP / ATCC 700724)</name>
    <dbReference type="NCBI Taxonomy" id="233412"/>
    <lineage>
        <taxon>Bacteria</taxon>
        <taxon>Pseudomonadati</taxon>
        <taxon>Pseudomonadota</taxon>
        <taxon>Gammaproteobacteria</taxon>
        <taxon>Pasteurellales</taxon>
        <taxon>Pasteurellaceae</taxon>
        <taxon>Haemophilus</taxon>
    </lineage>
</organism>
<comment type="function">
    <text evidence="1">Required for disulfide bond formation in some periplasmic proteins. Acts by oxidizing the DsbA protein.</text>
</comment>
<comment type="subcellular location">
    <subcellularLocation>
        <location evidence="1">Cell inner membrane</location>
        <topology evidence="1">Multi-pass membrane protein</topology>
    </subcellularLocation>
</comment>
<comment type="similarity">
    <text evidence="1">Belongs to the DsbB family.</text>
</comment>
<protein>
    <recommendedName>
        <fullName evidence="1">Disulfide bond formation protein B</fullName>
    </recommendedName>
    <alternativeName>
        <fullName evidence="1">Disulfide oxidoreductase</fullName>
    </alternativeName>
</protein>
<proteinExistence type="inferred from homology"/>